<sequence>MLSRRIIPCLDVRDGRVVKGVKFRDHIDMGDIVELAMRYRDQGADELVFYDIGASPEGRSVDYAWVERVARLIDIPFCVAGGIRDVETARAVLHAGADKISINSPALGRPQLISELADAFGVQCVVVGIDSIREEDGQWRVRRYTGDPSKTQALPMRTLDWVAEAQRLGAGEIVLNCMDNDGVRHGYDIAQLRQVRALCRVPLIASGGAGEMQHFADVFDQADADGALAASVFHSGAIPIPELKRFLRAQQIEVRDGQ</sequence>
<feature type="chain" id="PRO_0000142267" description="Imidazole glycerol phosphate synthase subunit HisF">
    <location>
        <begin position="1"/>
        <end position="258"/>
    </location>
</feature>
<feature type="active site" evidence="1">
    <location>
        <position position="11"/>
    </location>
</feature>
<feature type="active site" evidence="1">
    <location>
        <position position="130"/>
    </location>
</feature>
<organism>
    <name type="scientific">Xanthomonas campestris pv. campestris (strain 8004)</name>
    <dbReference type="NCBI Taxonomy" id="314565"/>
    <lineage>
        <taxon>Bacteria</taxon>
        <taxon>Pseudomonadati</taxon>
        <taxon>Pseudomonadota</taxon>
        <taxon>Gammaproteobacteria</taxon>
        <taxon>Lysobacterales</taxon>
        <taxon>Lysobacteraceae</taxon>
        <taxon>Xanthomonas</taxon>
    </lineage>
</organism>
<protein>
    <recommendedName>
        <fullName evidence="1">Imidazole glycerol phosphate synthase subunit HisF</fullName>
        <ecNumber evidence="1">4.3.2.10</ecNumber>
    </recommendedName>
    <alternativeName>
        <fullName evidence="1">IGP synthase cyclase subunit</fullName>
    </alternativeName>
    <alternativeName>
        <fullName evidence="1">IGP synthase subunit HisF</fullName>
    </alternativeName>
    <alternativeName>
        <fullName evidence="1">ImGP synthase subunit HisF</fullName>
        <shortName evidence="1">IGPS subunit HisF</shortName>
    </alternativeName>
</protein>
<dbReference type="EC" id="4.3.2.10" evidence="1"/>
<dbReference type="EMBL" id="CP000050">
    <property type="protein sequence ID" value="AAY49428.1"/>
    <property type="molecule type" value="Genomic_DNA"/>
</dbReference>
<dbReference type="RefSeq" id="WP_011036984.1">
    <property type="nucleotide sequence ID" value="NZ_CP155948.1"/>
</dbReference>
<dbReference type="SMR" id="Q4UU45"/>
<dbReference type="GeneID" id="58013638"/>
<dbReference type="KEGG" id="xcb:XC_2375"/>
<dbReference type="HOGENOM" id="CLU_048577_4_0_6"/>
<dbReference type="UniPathway" id="UPA00031">
    <property type="reaction ID" value="UER00010"/>
</dbReference>
<dbReference type="Proteomes" id="UP000000420">
    <property type="component" value="Chromosome"/>
</dbReference>
<dbReference type="GO" id="GO:0005737">
    <property type="term" value="C:cytoplasm"/>
    <property type="evidence" value="ECO:0007669"/>
    <property type="project" value="UniProtKB-SubCell"/>
</dbReference>
<dbReference type="GO" id="GO:0000107">
    <property type="term" value="F:imidazoleglycerol-phosphate synthase activity"/>
    <property type="evidence" value="ECO:0007669"/>
    <property type="project" value="UniProtKB-UniRule"/>
</dbReference>
<dbReference type="GO" id="GO:0016829">
    <property type="term" value="F:lyase activity"/>
    <property type="evidence" value="ECO:0007669"/>
    <property type="project" value="UniProtKB-KW"/>
</dbReference>
<dbReference type="GO" id="GO:0000105">
    <property type="term" value="P:L-histidine biosynthetic process"/>
    <property type="evidence" value="ECO:0007669"/>
    <property type="project" value="UniProtKB-UniRule"/>
</dbReference>
<dbReference type="CDD" id="cd04731">
    <property type="entry name" value="HisF"/>
    <property type="match status" value="1"/>
</dbReference>
<dbReference type="FunFam" id="3.20.20.70:FF:000006">
    <property type="entry name" value="Imidazole glycerol phosphate synthase subunit HisF"/>
    <property type="match status" value="1"/>
</dbReference>
<dbReference type="Gene3D" id="3.20.20.70">
    <property type="entry name" value="Aldolase class I"/>
    <property type="match status" value="1"/>
</dbReference>
<dbReference type="HAMAP" id="MF_01013">
    <property type="entry name" value="HisF"/>
    <property type="match status" value="1"/>
</dbReference>
<dbReference type="InterPro" id="IPR013785">
    <property type="entry name" value="Aldolase_TIM"/>
</dbReference>
<dbReference type="InterPro" id="IPR006062">
    <property type="entry name" value="His_biosynth"/>
</dbReference>
<dbReference type="InterPro" id="IPR004651">
    <property type="entry name" value="HisF"/>
</dbReference>
<dbReference type="InterPro" id="IPR050064">
    <property type="entry name" value="IGPS_HisA/HisF"/>
</dbReference>
<dbReference type="InterPro" id="IPR011060">
    <property type="entry name" value="RibuloseP-bd_barrel"/>
</dbReference>
<dbReference type="NCBIfam" id="TIGR00735">
    <property type="entry name" value="hisF"/>
    <property type="match status" value="1"/>
</dbReference>
<dbReference type="PANTHER" id="PTHR21235:SF2">
    <property type="entry name" value="IMIDAZOLE GLYCEROL PHOSPHATE SYNTHASE HISHF"/>
    <property type="match status" value="1"/>
</dbReference>
<dbReference type="PANTHER" id="PTHR21235">
    <property type="entry name" value="IMIDAZOLE GLYCEROL PHOSPHATE SYNTHASE SUBUNIT HISF/H IGP SYNTHASE SUBUNIT HISF/H"/>
    <property type="match status" value="1"/>
</dbReference>
<dbReference type="Pfam" id="PF00977">
    <property type="entry name" value="His_biosynth"/>
    <property type="match status" value="1"/>
</dbReference>
<dbReference type="SUPFAM" id="SSF51366">
    <property type="entry name" value="Ribulose-phoshate binding barrel"/>
    <property type="match status" value="1"/>
</dbReference>
<comment type="function">
    <text evidence="1">IGPS catalyzes the conversion of PRFAR and glutamine to IGP, AICAR and glutamate. The HisF subunit catalyzes the cyclization activity that produces IGP and AICAR from PRFAR using the ammonia provided by the HisH subunit.</text>
</comment>
<comment type="catalytic activity">
    <reaction evidence="1">
        <text>5-[(5-phospho-1-deoxy-D-ribulos-1-ylimino)methylamino]-1-(5-phospho-beta-D-ribosyl)imidazole-4-carboxamide + L-glutamine = D-erythro-1-(imidazol-4-yl)glycerol 3-phosphate + 5-amino-1-(5-phospho-beta-D-ribosyl)imidazole-4-carboxamide + L-glutamate + H(+)</text>
        <dbReference type="Rhea" id="RHEA:24793"/>
        <dbReference type="ChEBI" id="CHEBI:15378"/>
        <dbReference type="ChEBI" id="CHEBI:29985"/>
        <dbReference type="ChEBI" id="CHEBI:58278"/>
        <dbReference type="ChEBI" id="CHEBI:58359"/>
        <dbReference type="ChEBI" id="CHEBI:58475"/>
        <dbReference type="ChEBI" id="CHEBI:58525"/>
        <dbReference type="EC" id="4.3.2.10"/>
    </reaction>
</comment>
<comment type="pathway">
    <text evidence="1">Amino-acid biosynthesis; L-histidine biosynthesis; L-histidine from 5-phospho-alpha-D-ribose 1-diphosphate: step 5/9.</text>
</comment>
<comment type="subunit">
    <text evidence="1">Heterodimer of HisH and HisF.</text>
</comment>
<comment type="subcellular location">
    <subcellularLocation>
        <location evidence="1">Cytoplasm</location>
    </subcellularLocation>
</comment>
<comment type="similarity">
    <text evidence="1">Belongs to the HisA/HisF family.</text>
</comment>
<evidence type="ECO:0000255" key="1">
    <source>
        <dbReference type="HAMAP-Rule" id="MF_01013"/>
    </source>
</evidence>
<proteinExistence type="inferred from homology"/>
<reference key="1">
    <citation type="journal article" date="2005" name="Genome Res.">
        <title>Comparative and functional genomic analyses of the pathogenicity of phytopathogen Xanthomonas campestris pv. campestris.</title>
        <authorList>
            <person name="Qian W."/>
            <person name="Jia Y."/>
            <person name="Ren S.-X."/>
            <person name="He Y.-Q."/>
            <person name="Feng J.-X."/>
            <person name="Lu L.-F."/>
            <person name="Sun Q."/>
            <person name="Ying G."/>
            <person name="Tang D.-J."/>
            <person name="Tang H."/>
            <person name="Wu W."/>
            <person name="Hao P."/>
            <person name="Wang L."/>
            <person name="Jiang B.-L."/>
            <person name="Zeng S."/>
            <person name="Gu W.-Y."/>
            <person name="Lu G."/>
            <person name="Rong L."/>
            <person name="Tian Y."/>
            <person name="Yao Z."/>
            <person name="Fu G."/>
            <person name="Chen B."/>
            <person name="Fang R."/>
            <person name="Qiang B."/>
            <person name="Chen Z."/>
            <person name="Zhao G.-P."/>
            <person name="Tang J.-L."/>
            <person name="He C."/>
        </authorList>
    </citation>
    <scope>NUCLEOTIDE SEQUENCE [LARGE SCALE GENOMIC DNA]</scope>
    <source>
        <strain>8004</strain>
    </source>
</reference>
<accession>Q4UU45</accession>
<name>HIS6_XANC8</name>
<gene>
    <name evidence="1" type="primary">hisF</name>
    <name type="ordered locus">XC_2375</name>
</gene>
<keyword id="KW-0028">Amino-acid biosynthesis</keyword>
<keyword id="KW-0963">Cytoplasm</keyword>
<keyword id="KW-0368">Histidine biosynthesis</keyword>
<keyword id="KW-0456">Lyase</keyword>